<comment type="function">
    <text evidence="1 6">Part of the endoplasmic reticulum membrane protein complex (EMC) that enables the energy-independent insertion into endoplasmic reticulum membranes of newly synthesized membrane proteins (PubMed:29809151). Preferentially accommodates proteins with transmembrane domains that are weakly hydrophobic or contain destabilizing features such as charged and aromatic residues (PubMed:29809151). Involved in the cotranslational insertion of multi-pass membrane proteins in which stop-transfer membrane-anchor sequences become ER membrane spanning helices (PubMed:29809151). It is also required for the post-translational insertion of tail-anchored/TA proteins in endoplasmic reticulum membranes. By mediating the proper cotranslational insertion of N-terminal transmembrane domains in an N-exo topology, with translocated N-terminus in the lumen of the ER, controls the topology of multi-pass membrane proteins (By similarity).</text>
</comment>
<comment type="subunit">
    <text evidence="5 6">Component of the ER membrane protein complex (EMC), which is composed of EMC1, EMC2, EMC3, EMC4, EMC5 and EMC6.</text>
</comment>
<comment type="interaction">
    <interactant intactId="EBI-24977">
        <id>P40540</id>
    </interactant>
    <interactant intactId="EBI-26122">
        <id>P14359</id>
        <label>SNA3</label>
    </interactant>
    <organismsDiffer>false</organismsDiffer>
    <experiments>3</experiments>
</comment>
<comment type="interaction">
    <interactant intactId="EBI-24977">
        <id>P40540</id>
    </interactant>
    <interactant intactId="EBI-26193">
        <id>P39543</id>
        <label>SOP4</label>
    </interactant>
    <organismsDiffer>false</organismsDiffer>
    <experiments>3</experiments>
</comment>
<comment type="interaction">
    <interactant intactId="EBI-24977">
        <id>P40540</id>
    </interactant>
    <interactant intactId="EBI-12501">
        <id>P80967</id>
        <label>TOM5</label>
    </interactant>
    <organismsDiffer>false</organismsDiffer>
    <experiments>2</experiments>
</comment>
<comment type="subcellular location">
    <subcellularLocation>
        <location evidence="3">Endoplasmic reticulum membrane</location>
        <topology evidence="3">Multi-pass membrane protein</topology>
    </subcellularLocation>
</comment>
<comment type="miscellaneous">
    <text evidence="4">Present with 5240 molecules/cell in log phase SD medium.</text>
</comment>
<comment type="similarity">
    <text evidence="7">Belongs to the membrane magnesium transporter (TC 1.A.67) family.</text>
</comment>
<proteinExistence type="evidence at protein level"/>
<gene>
    <name type="primary">EMC5</name>
    <name type="synonym">KRE27</name>
    <name type="ordered locus">YIL027C</name>
</gene>
<keyword id="KW-0002">3D-structure</keyword>
<keyword id="KW-0256">Endoplasmic reticulum</keyword>
<keyword id="KW-0472">Membrane</keyword>
<keyword id="KW-1185">Reference proteome</keyword>
<keyword id="KW-0812">Transmembrane</keyword>
<keyword id="KW-1133">Transmembrane helix</keyword>
<organism>
    <name type="scientific">Saccharomyces cerevisiae (strain ATCC 204508 / S288c)</name>
    <name type="common">Baker's yeast</name>
    <dbReference type="NCBI Taxonomy" id="559292"/>
    <lineage>
        <taxon>Eukaryota</taxon>
        <taxon>Fungi</taxon>
        <taxon>Dikarya</taxon>
        <taxon>Ascomycota</taxon>
        <taxon>Saccharomycotina</taxon>
        <taxon>Saccharomycetes</taxon>
        <taxon>Saccharomycetales</taxon>
        <taxon>Saccharomycetaceae</taxon>
        <taxon>Saccharomyces</taxon>
    </lineage>
</organism>
<accession>P40540</accession>
<accession>D6VVQ3</accession>
<dbReference type="EMBL" id="Z46881">
    <property type="protein sequence ID" value="CAA86965.1"/>
    <property type="molecule type" value="Genomic_DNA"/>
</dbReference>
<dbReference type="EMBL" id="AY557848">
    <property type="protein sequence ID" value="AAS56174.1"/>
    <property type="molecule type" value="Genomic_DNA"/>
</dbReference>
<dbReference type="EMBL" id="BK006942">
    <property type="protein sequence ID" value="DAA08519.1"/>
    <property type="molecule type" value="Genomic_DNA"/>
</dbReference>
<dbReference type="PIR" id="S49955">
    <property type="entry name" value="S49955"/>
</dbReference>
<dbReference type="RefSeq" id="NP_012237.1">
    <property type="nucleotide sequence ID" value="NM_001179377.1"/>
</dbReference>
<dbReference type="PDB" id="6WB9">
    <property type="method" value="EM"/>
    <property type="resolution" value="3.00 A"/>
    <property type="chains" value="5=1-141"/>
</dbReference>
<dbReference type="PDB" id="7KRA">
    <property type="method" value="EM"/>
    <property type="resolution" value="3.20 A"/>
    <property type="chains" value="E=1-141"/>
</dbReference>
<dbReference type="PDB" id="7KTX">
    <property type="method" value="EM"/>
    <property type="resolution" value="4.30 A"/>
    <property type="chains" value="E=1-141"/>
</dbReference>
<dbReference type="PDBsum" id="6WB9"/>
<dbReference type="PDBsum" id="7KRA"/>
<dbReference type="PDBsum" id="7KTX"/>
<dbReference type="EMDB" id="EMD-21587"/>
<dbReference type="EMDB" id="EMD-23003"/>
<dbReference type="EMDB" id="EMD-23033"/>
<dbReference type="SMR" id="P40540"/>
<dbReference type="BioGRID" id="34962">
    <property type="interactions" value="203"/>
</dbReference>
<dbReference type="ComplexPortal" id="CPX-307">
    <property type="entry name" value="Endoplasmic Reticulum Membrane Complex"/>
</dbReference>
<dbReference type="DIP" id="DIP-4937N"/>
<dbReference type="FunCoup" id="P40540">
    <property type="interactions" value="86"/>
</dbReference>
<dbReference type="IntAct" id="P40540">
    <property type="interactions" value="39"/>
</dbReference>
<dbReference type="MINT" id="P40540"/>
<dbReference type="STRING" id="4932.YIL027C"/>
<dbReference type="TCDB" id="1.A.67.1.7">
    <property type="family name" value="the membrane mg(2+) transporter (mmgt) family"/>
</dbReference>
<dbReference type="TCDB" id="3.A.27.1.2">
    <property type="family name" value="the endoplasmic reticulum membrane protein insertion complex (emc) family"/>
</dbReference>
<dbReference type="PaxDb" id="4932-YIL027C"/>
<dbReference type="PeptideAtlas" id="P40540"/>
<dbReference type="EnsemblFungi" id="YIL027C_mRNA">
    <property type="protein sequence ID" value="YIL027C"/>
    <property type="gene ID" value="YIL027C"/>
</dbReference>
<dbReference type="GeneID" id="854785"/>
<dbReference type="KEGG" id="sce:YIL027C"/>
<dbReference type="AGR" id="SGD:S000001289"/>
<dbReference type="SGD" id="S000001289">
    <property type="gene designation" value="EMC5"/>
</dbReference>
<dbReference type="VEuPathDB" id="FungiDB:YIL027C"/>
<dbReference type="eggNOG" id="ENOG502S8V0">
    <property type="taxonomic scope" value="Eukaryota"/>
</dbReference>
<dbReference type="HOGENOM" id="CLU_132206_1_0_1"/>
<dbReference type="InParanoid" id="P40540"/>
<dbReference type="OMA" id="STHYHTD"/>
<dbReference type="OrthoDB" id="44756at2759"/>
<dbReference type="BioCyc" id="YEAST:G3O-31301-MONOMER"/>
<dbReference type="BioGRID-ORCS" id="854785">
    <property type="hits" value="0 hits in 10 CRISPR screens"/>
</dbReference>
<dbReference type="PRO" id="PR:P40540"/>
<dbReference type="Proteomes" id="UP000002311">
    <property type="component" value="Chromosome IX"/>
</dbReference>
<dbReference type="RNAct" id="P40540">
    <property type="molecule type" value="protein"/>
</dbReference>
<dbReference type="GO" id="GO:0072546">
    <property type="term" value="C:EMC complex"/>
    <property type="evidence" value="ECO:0000314"/>
    <property type="project" value="UniProtKB"/>
</dbReference>
<dbReference type="GO" id="GO:0005783">
    <property type="term" value="C:endoplasmic reticulum"/>
    <property type="evidence" value="ECO:0007005"/>
    <property type="project" value="SGD"/>
</dbReference>
<dbReference type="GO" id="GO:0006644">
    <property type="term" value="P:phospholipid metabolic process"/>
    <property type="evidence" value="ECO:0000314"/>
    <property type="project" value="ComplexPortal"/>
</dbReference>
<dbReference type="GO" id="GO:0015914">
    <property type="term" value="P:phospholipid transport"/>
    <property type="evidence" value="ECO:0000315"/>
    <property type="project" value="ComplexPortal"/>
</dbReference>
<dbReference type="GO" id="GO:0034975">
    <property type="term" value="P:protein folding in endoplasmic reticulum"/>
    <property type="evidence" value="ECO:0007003"/>
    <property type="project" value="SGD"/>
</dbReference>
<dbReference type="GO" id="GO:0045050">
    <property type="term" value="P:protein insertion into ER membrane by stop-transfer membrane-anchor sequence"/>
    <property type="evidence" value="ECO:0000314"/>
    <property type="project" value="UniProtKB"/>
</dbReference>
<dbReference type="InterPro" id="IPR053279">
    <property type="entry name" value="EMC_subunit"/>
</dbReference>
<dbReference type="InterPro" id="IPR018937">
    <property type="entry name" value="MMgT"/>
</dbReference>
<dbReference type="PANTHER" id="PTHR28144">
    <property type="entry name" value="ER MEMBRANE PROTEIN COMPLEX SUBUNIT 5"/>
    <property type="match status" value="1"/>
</dbReference>
<dbReference type="PANTHER" id="PTHR28144:SF1">
    <property type="entry name" value="ER MEMBRANE PROTEIN COMPLEX SUBUNIT 5"/>
    <property type="match status" value="1"/>
</dbReference>
<dbReference type="Pfam" id="PF10270">
    <property type="entry name" value="MMgT"/>
    <property type="match status" value="1"/>
</dbReference>
<feature type="chain" id="PRO_0000202998" description="ER membrane protein complex subunit 5">
    <location>
        <begin position="1"/>
        <end position="141"/>
    </location>
</feature>
<feature type="topological domain" description="Cytoplasmic" evidence="2">
    <location>
        <begin position="1"/>
        <end position="6"/>
    </location>
</feature>
<feature type="transmembrane region" description="Helical" evidence="2">
    <location>
        <begin position="7"/>
        <end position="27"/>
    </location>
</feature>
<feature type="topological domain" description="Lumenal" evidence="2">
    <location>
        <begin position="28"/>
        <end position="48"/>
    </location>
</feature>
<feature type="transmembrane region" description="Helical" evidence="2">
    <location>
        <begin position="49"/>
        <end position="69"/>
    </location>
</feature>
<feature type="topological domain" description="Cytoplasmic" evidence="2">
    <location>
        <begin position="70"/>
        <end position="141"/>
    </location>
</feature>
<feature type="helix" evidence="8">
    <location>
        <begin position="3"/>
        <end position="30"/>
    </location>
</feature>
<feature type="helix" evidence="8">
    <location>
        <begin position="32"/>
        <end position="34"/>
    </location>
</feature>
<feature type="helix" evidence="8">
    <location>
        <begin position="47"/>
        <end position="65"/>
    </location>
</feature>
<feature type="helix" evidence="8">
    <location>
        <begin position="95"/>
        <end position="98"/>
    </location>
</feature>
<feature type="helix" evidence="8">
    <location>
        <begin position="100"/>
        <end position="105"/>
    </location>
</feature>
<feature type="helix" evidence="8">
    <location>
        <begin position="111"/>
        <end position="114"/>
    </location>
</feature>
<feature type="strand" evidence="8">
    <location>
        <begin position="117"/>
        <end position="119"/>
    </location>
</feature>
<feature type="helix" evidence="8">
    <location>
        <begin position="122"/>
        <end position="134"/>
    </location>
</feature>
<name>EMC5_YEAST</name>
<reference key="1">
    <citation type="journal article" date="1997" name="Nature">
        <title>The nucleotide sequence of Saccharomyces cerevisiae chromosome IX.</title>
        <authorList>
            <person name="Churcher C.M."/>
            <person name="Bowman S."/>
            <person name="Badcock K."/>
            <person name="Bankier A.T."/>
            <person name="Brown D."/>
            <person name="Chillingworth T."/>
            <person name="Connor R."/>
            <person name="Devlin K."/>
            <person name="Gentles S."/>
            <person name="Hamlin N."/>
            <person name="Harris D.E."/>
            <person name="Horsnell T."/>
            <person name="Hunt S."/>
            <person name="Jagels K."/>
            <person name="Jones M."/>
            <person name="Lye G."/>
            <person name="Moule S."/>
            <person name="Odell C."/>
            <person name="Pearson D."/>
            <person name="Rajandream M.A."/>
            <person name="Rice P."/>
            <person name="Rowley N."/>
            <person name="Skelton J."/>
            <person name="Smith V."/>
            <person name="Walsh S.V."/>
            <person name="Whitehead S."/>
            <person name="Barrell B.G."/>
        </authorList>
    </citation>
    <scope>NUCLEOTIDE SEQUENCE [LARGE SCALE GENOMIC DNA]</scope>
    <source>
        <strain>ATCC 204508 / S288c</strain>
    </source>
</reference>
<reference key="2">
    <citation type="journal article" date="2014" name="G3 (Bethesda)">
        <title>The reference genome sequence of Saccharomyces cerevisiae: Then and now.</title>
        <authorList>
            <person name="Engel S.R."/>
            <person name="Dietrich F.S."/>
            <person name="Fisk D.G."/>
            <person name="Binkley G."/>
            <person name="Balakrishnan R."/>
            <person name="Costanzo M.C."/>
            <person name="Dwight S.S."/>
            <person name="Hitz B.C."/>
            <person name="Karra K."/>
            <person name="Nash R.S."/>
            <person name="Weng S."/>
            <person name="Wong E.D."/>
            <person name="Lloyd P."/>
            <person name="Skrzypek M.S."/>
            <person name="Miyasato S.R."/>
            <person name="Simison M."/>
            <person name="Cherry J.M."/>
        </authorList>
    </citation>
    <scope>GENOME REANNOTATION</scope>
    <source>
        <strain>ATCC 204508 / S288c</strain>
    </source>
</reference>
<reference key="3">
    <citation type="journal article" date="2007" name="Genome Res.">
        <title>Approaching a complete repository of sequence-verified protein-encoding clones for Saccharomyces cerevisiae.</title>
        <authorList>
            <person name="Hu Y."/>
            <person name="Rolfs A."/>
            <person name="Bhullar B."/>
            <person name="Murthy T.V.S."/>
            <person name="Zhu C."/>
            <person name="Berger M.F."/>
            <person name="Camargo A.A."/>
            <person name="Kelley F."/>
            <person name="McCarron S."/>
            <person name="Jepson D."/>
            <person name="Richardson A."/>
            <person name="Raphael J."/>
            <person name="Moreira D."/>
            <person name="Taycher E."/>
            <person name="Zuo D."/>
            <person name="Mohr S."/>
            <person name="Kane M.F."/>
            <person name="Williamson J."/>
            <person name="Simpson A.J.G."/>
            <person name="Bulyk M.L."/>
            <person name="Harlow E."/>
            <person name="Marsischky G."/>
            <person name="Kolodner R.D."/>
            <person name="LaBaer J."/>
        </authorList>
    </citation>
    <scope>NUCLEOTIDE SEQUENCE [GENOMIC DNA]</scope>
    <source>
        <strain>ATCC 204508 / S288c</strain>
    </source>
</reference>
<reference key="4">
    <citation type="journal article" date="2003" name="Nature">
        <title>Global analysis of protein localization in budding yeast.</title>
        <authorList>
            <person name="Huh W.-K."/>
            <person name="Falvo J.V."/>
            <person name="Gerke L.C."/>
            <person name="Carroll A.S."/>
            <person name="Howson R.W."/>
            <person name="Weissman J.S."/>
            <person name="O'Shea E.K."/>
        </authorList>
    </citation>
    <scope>SUBCELLULAR LOCATION [LARGE SCALE ANALYSIS]</scope>
</reference>
<reference key="5">
    <citation type="journal article" date="2003" name="Nature">
        <title>Global analysis of protein expression in yeast.</title>
        <authorList>
            <person name="Ghaemmaghami S."/>
            <person name="Huh W.-K."/>
            <person name="Bower K."/>
            <person name="Howson R.W."/>
            <person name="Belle A."/>
            <person name="Dephoure N."/>
            <person name="O'Shea E.K."/>
            <person name="Weissman J.S."/>
        </authorList>
    </citation>
    <scope>LEVEL OF PROTEIN EXPRESSION [LARGE SCALE ANALYSIS]</scope>
</reference>
<reference key="6">
    <citation type="journal article" date="2006" name="Proc. Natl. Acad. Sci. U.S.A.">
        <title>A global topology map of the Saccharomyces cerevisiae membrane proteome.</title>
        <authorList>
            <person name="Kim H."/>
            <person name="Melen K."/>
            <person name="Oesterberg M."/>
            <person name="von Heijne G."/>
        </authorList>
    </citation>
    <scope>TOPOLOGY [LARGE SCALE ANALYSIS]</scope>
    <source>
        <strain>ATCC 208353 / W303-1A</strain>
    </source>
</reference>
<reference key="7">
    <citation type="journal article" date="2009" name="Science">
        <title>Comprehensive characterization of genes required for protein folding in the endoplasmic reticulum.</title>
        <authorList>
            <person name="Jonikas M.C."/>
            <person name="Collins S.R."/>
            <person name="Denic V."/>
            <person name="Oh E."/>
            <person name="Quan E.M."/>
            <person name="Schmid V."/>
            <person name="Weibezahn J."/>
            <person name="Schwappach B."/>
            <person name="Walter P."/>
            <person name="Weissman J.S."/>
            <person name="Schuldiner M."/>
        </authorList>
    </citation>
    <scope>IDENTIFICATION IN EMC COMPLEX</scope>
</reference>
<reference key="8">
    <citation type="journal article" date="2018" name="Elife">
        <title>The ER membrane protein complex interacts cotranslationally to enable biogenesis of multipass membrane proteins.</title>
        <authorList>
            <person name="Shurtleff M.J."/>
            <person name="Itzhak D.N."/>
            <person name="Hussmann J.A."/>
            <person name="Schirle Oakdale N.T."/>
            <person name="Costa E.A."/>
            <person name="Jonikas M."/>
            <person name="Weibezahn J."/>
            <person name="Popova K.D."/>
            <person name="Jan C.H."/>
            <person name="Sinitcyn P."/>
            <person name="Vembar S.S."/>
            <person name="Hernandez H."/>
            <person name="Cox J."/>
            <person name="Burlingame A.L."/>
            <person name="Brodsky J.L."/>
            <person name="Frost A."/>
            <person name="Borner G.H."/>
            <person name="Weissman J.S."/>
        </authorList>
    </citation>
    <scope>FUNCTION</scope>
    <scope>SUBUNIT</scope>
</reference>
<evidence type="ECO:0000250" key="1">
    <source>
        <dbReference type="UniProtKB" id="Q5J8M3"/>
    </source>
</evidence>
<evidence type="ECO:0000255" key="2"/>
<evidence type="ECO:0000269" key="3">
    <source>
    </source>
</evidence>
<evidence type="ECO:0000269" key="4">
    <source>
    </source>
</evidence>
<evidence type="ECO:0000269" key="5">
    <source>
    </source>
</evidence>
<evidence type="ECO:0000269" key="6">
    <source>
    </source>
</evidence>
<evidence type="ECO:0000305" key="7"/>
<evidence type="ECO:0007829" key="8">
    <source>
        <dbReference type="PDB" id="6WB9"/>
    </source>
</evidence>
<protein>
    <recommendedName>
        <fullName>ER membrane protein complex subunit 5</fullName>
    </recommendedName>
    <alternativeName>
        <fullName>Killer toxin-resistance protein 27</fullName>
    </alternativeName>
</protein>
<sequence length="141" mass="15907">MSFVSKLLYTVSALVLFHSGFSSYEFHHLLKLNSLNNAQGAISKLPKDIMYETYAGLILFVLAVFTSFEKLQYLPIESNDGKIISQGNYLKEIALNKATNVDNLIGSNPNGEIIFTPSFVDVHMKRKICREWASNTVKKEK</sequence>